<gene>
    <name type="primary">MT-CYB</name>
    <name type="synonym">COB</name>
    <name type="synonym">CYTB</name>
    <name type="synonym">MTCYB</name>
</gene>
<dbReference type="EMBL" id="AF258871">
    <property type="protein sequence ID" value="AAL74307.1"/>
    <property type="molecule type" value="Genomic_DNA"/>
</dbReference>
<dbReference type="SMR" id="Q8SJK9"/>
<dbReference type="GO" id="GO:0005743">
    <property type="term" value="C:mitochondrial inner membrane"/>
    <property type="evidence" value="ECO:0007669"/>
    <property type="project" value="UniProtKB-SubCell"/>
</dbReference>
<dbReference type="GO" id="GO:0045275">
    <property type="term" value="C:respiratory chain complex III"/>
    <property type="evidence" value="ECO:0007669"/>
    <property type="project" value="InterPro"/>
</dbReference>
<dbReference type="GO" id="GO:0046872">
    <property type="term" value="F:metal ion binding"/>
    <property type="evidence" value="ECO:0007669"/>
    <property type="project" value="UniProtKB-KW"/>
</dbReference>
<dbReference type="GO" id="GO:0008121">
    <property type="term" value="F:ubiquinol-cytochrome-c reductase activity"/>
    <property type="evidence" value="ECO:0007669"/>
    <property type="project" value="InterPro"/>
</dbReference>
<dbReference type="GO" id="GO:0006122">
    <property type="term" value="P:mitochondrial electron transport, ubiquinol to cytochrome c"/>
    <property type="evidence" value="ECO:0007669"/>
    <property type="project" value="TreeGrafter"/>
</dbReference>
<dbReference type="CDD" id="cd00290">
    <property type="entry name" value="cytochrome_b_C"/>
    <property type="match status" value="1"/>
</dbReference>
<dbReference type="CDD" id="cd00284">
    <property type="entry name" value="Cytochrome_b_N"/>
    <property type="match status" value="1"/>
</dbReference>
<dbReference type="FunFam" id="1.20.810.10:FF:000002">
    <property type="entry name" value="Cytochrome b"/>
    <property type="match status" value="1"/>
</dbReference>
<dbReference type="Gene3D" id="1.20.810.10">
    <property type="entry name" value="Cytochrome Bc1 Complex, Chain C"/>
    <property type="match status" value="1"/>
</dbReference>
<dbReference type="InterPro" id="IPR005798">
    <property type="entry name" value="Cyt_b/b6_C"/>
</dbReference>
<dbReference type="InterPro" id="IPR036150">
    <property type="entry name" value="Cyt_b/b6_C_sf"/>
</dbReference>
<dbReference type="InterPro" id="IPR005797">
    <property type="entry name" value="Cyt_b/b6_N"/>
</dbReference>
<dbReference type="InterPro" id="IPR027387">
    <property type="entry name" value="Cytb/b6-like_sf"/>
</dbReference>
<dbReference type="InterPro" id="IPR030689">
    <property type="entry name" value="Cytochrome_b"/>
</dbReference>
<dbReference type="InterPro" id="IPR048260">
    <property type="entry name" value="Cytochrome_b_C_euk/bac"/>
</dbReference>
<dbReference type="InterPro" id="IPR048259">
    <property type="entry name" value="Cytochrome_b_N_euk/bac"/>
</dbReference>
<dbReference type="InterPro" id="IPR016174">
    <property type="entry name" value="Di-haem_cyt_TM"/>
</dbReference>
<dbReference type="PANTHER" id="PTHR19271">
    <property type="entry name" value="CYTOCHROME B"/>
    <property type="match status" value="1"/>
</dbReference>
<dbReference type="PANTHER" id="PTHR19271:SF16">
    <property type="entry name" value="CYTOCHROME B"/>
    <property type="match status" value="1"/>
</dbReference>
<dbReference type="Pfam" id="PF00032">
    <property type="entry name" value="Cytochrom_B_C"/>
    <property type="match status" value="1"/>
</dbReference>
<dbReference type="Pfam" id="PF00033">
    <property type="entry name" value="Cytochrome_B"/>
    <property type="match status" value="1"/>
</dbReference>
<dbReference type="PIRSF" id="PIRSF038885">
    <property type="entry name" value="COB"/>
    <property type="match status" value="1"/>
</dbReference>
<dbReference type="SUPFAM" id="SSF81648">
    <property type="entry name" value="a domain/subunit of cytochrome bc1 complex (Ubiquinol-cytochrome c reductase)"/>
    <property type="match status" value="1"/>
</dbReference>
<dbReference type="SUPFAM" id="SSF81342">
    <property type="entry name" value="Transmembrane di-heme cytochromes"/>
    <property type="match status" value="1"/>
</dbReference>
<dbReference type="PROSITE" id="PS51003">
    <property type="entry name" value="CYTB_CTER"/>
    <property type="match status" value="1"/>
</dbReference>
<dbReference type="PROSITE" id="PS51002">
    <property type="entry name" value="CYTB_NTER"/>
    <property type="match status" value="1"/>
</dbReference>
<comment type="function">
    <text evidence="2">Component of the ubiquinol-cytochrome c reductase complex (complex III or cytochrome b-c1 complex) that is part of the mitochondrial respiratory chain. The b-c1 complex mediates electron transfer from ubiquinol to cytochrome c. Contributes to the generation of a proton gradient across the mitochondrial membrane that is then used for ATP synthesis.</text>
</comment>
<comment type="cofactor">
    <cofactor evidence="2">
        <name>heme b</name>
        <dbReference type="ChEBI" id="CHEBI:60344"/>
    </cofactor>
    <text evidence="2">Binds 2 heme b groups non-covalently.</text>
</comment>
<comment type="subunit">
    <text evidence="2">The cytochrome bc1 complex contains 3 respiratory subunits (MT-CYB, CYC1 and UQCRFS1), 2 core proteins (UQCRC1 and UQCRC2) and probably 6 low-molecular weight proteins.</text>
</comment>
<comment type="subcellular location">
    <subcellularLocation>
        <location evidence="2">Mitochondrion inner membrane</location>
        <topology evidence="2">Multi-pass membrane protein</topology>
    </subcellularLocation>
</comment>
<comment type="miscellaneous">
    <text evidence="1">Heme 1 (or BL or b562) is low-potential and absorbs at about 562 nm, and heme 2 (or BH or b566) is high-potential and absorbs at about 566 nm.</text>
</comment>
<comment type="similarity">
    <text evidence="3 4">Belongs to the cytochrome b family.</text>
</comment>
<comment type="caution">
    <text evidence="2">The full-length protein contains only eight transmembrane helices, not nine as predicted by bioinformatics tools.</text>
</comment>
<organism>
    <name type="scientific">Terrapene carolina</name>
    <name type="common">Eastern box turtle</name>
    <name type="synonym">Testudo carolina</name>
    <dbReference type="NCBI Taxonomy" id="158814"/>
    <lineage>
        <taxon>Eukaryota</taxon>
        <taxon>Metazoa</taxon>
        <taxon>Chordata</taxon>
        <taxon>Craniata</taxon>
        <taxon>Vertebrata</taxon>
        <taxon>Euteleostomi</taxon>
        <taxon>Archelosauria</taxon>
        <taxon>Testudinata</taxon>
        <taxon>Testudines</taxon>
        <taxon>Cryptodira</taxon>
        <taxon>Durocryptodira</taxon>
        <taxon>Testudinoidea</taxon>
        <taxon>Emydidae</taxon>
        <taxon>Terrapene</taxon>
    </lineage>
</organism>
<name>CYB_TERCA</name>
<geneLocation type="mitochondrion"/>
<feature type="chain" id="PRO_0000061650" description="Cytochrome b">
    <location>
        <begin position="1"/>
        <end position="379"/>
    </location>
</feature>
<feature type="transmembrane region" description="Helical" evidence="2">
    <location>
        <begin position="34"/>
        <end position="54"/>
    </location>
</feature>
<feature type="transmembrane region" description="Helical" evidence="2">
    <location>
        <begin position="78"/>
        <end position="99"/>
    </location>
</feature>
<feature type="transmembrane region" description="Helical" evidence="2">
    <location>
        <begin position="114"/>
        <end position="134"/>
    </location>
</feature>
<feature type="transmembrane region" description="Helical" evidence="2">
    <location>
        <begin position="179"/>
        <end position="199"/>
    </location>
</feature>
<feature type="transmembrane region" description="Helical" evidence="2">
    <location>
        <begin position="227"/>
        <end position="247"/>
    </location>
</feature>
<feature type="transmembrane region" description="Helical" evidence="2">
    <location>
        <begin position="289"/>
        <end position="309"/>
    </location>
</feature>
<feature type="transmembrane region" description="Helical" evidence="2">
    <location>
        <begin position="321"/>
        <end position="341"/>
    </location>
</feature>
<feature type="transmembrane region" description="Helical" evidence="2">
    <location>
        <begin position="348"/>
        <end position="368"/>
    </location>
</feature>
<feature type="binding site" description="axial binding residue" evidence="2">
    <location>
        <position position="84"/>
    </location>
    <ligand>
        <name>heme b</name>
        <dbReference type="ChEBI" id="CHEBI:60344"/>
        <label>b562</label>
    </ligand>
    <ligandPart>
        <name>Fe</name>
        <dbReference type="ChEBI" id="CHEBI:18248"/>
    </ligandPart>
</feature>
<feature type="binding site" description="axial binding residue" evidence="2">
    <location>
        <position position="98"/>
    </location>
    <ligand>
        <name>heme b</name>
        <dbReference type="ChEBI" id="CHEBI:60344"/>
        <label>b566</label>
    </ligand>
    <ligandPart>
        <name>Fe</name>
        <dbReference type="ChEBI" id="CHEBI:18248"/>
    </ligandPart>
</feature>
<feature type="binding site" description="axial binding residue" evidence="2">
    <location>
        <position position="183"/>
    </location>
    <ligand>
        <name>heme b</name>
        <dbReference type="ChEBI" id="CHEBI:60344"/>
        <label>b562</label>
    </ligand>
    <ligandPart>
        <name>Fe</name>
        <dbReference type="ChEBI" id="CHEBI:18248"/>
    </ligandPart>
</feature>
<feature type="binding site" description="axial binding residue" evidence="2">
    <location>
        <position position="197"/>
    </location>
    <ligand>
        <name>heme b</name>
        <dbReference type="ChEBI" id="CHEBI:60344"/>
        <label>b566</label>
    </ligand>
    <ligandPart>
        <name>Fe</name>
        <dbReference type="ChEBI" id="CHEBI:18248"/>
    </ligandPart>
</feature>
<feature type="binding site" evidence="2">
    <location>
        <position position="202"/>
    </location>
    <ligand>
        <name>a ubiquinone</name>
        <dbReference type="ChEBI" id="CHEBI:16389"/>
    </ligand>
</feature>
<protein>
    <recommendedName>
        <fullName>Cytochrome b</fullName>
    </recommendedName>
    <alternativeName>
        <fullName>Complex III subunit 3</fullName>
    </alternativeName>
    <alternativeName>
        <fullName>Complex III subunit III</fullName>
    </alternativeName>
    <alternativeName>
        <fullName>Cytochrome b-c1 complex subunit 3</fullName>
    </alternativeName>
    <alternativeName>
        <fullName>Ubiquinol-cytochrome-c reductase complex cytochrome b subunit</fullName>
    </alternativeName>
</protein>
<sequence length="379" mass="42596">MSTNLRKTHPLAKIINNSFIDLPSPSNISAWWNFGSLLGTCLILQTITGIFLAMHYSPDISLAFSSVAHITRDVQYGWLIRNMHANGASLFFMCIYLHIGRGIYYGSYLYKETWNTGTTLLLLTMATAFVGYVLPWGQMSFWGATVITNLLSAIPYVGNTLVQWIWGGFSVDNATLTRFFTFHFLLPFTIMGLTVMHLLFLHETGSNNPTGLNSNTDKIPFHPYFSYKDLLGLILMLALLLTLTLFFPNLLGDPDNFTPANPLSTPPHIKPEWYFLFAYAILRSIPNKLGGVLALLMSILVLFLMPALHTSKQRTTQFRPLTQILFWSLIANLLVLTWIGGQPVENPFIIIGQVASILYFSILLILMPIAGMIENKMLT</sequence>
<proteinExistence type="inferred from homology"/>
<accession>Q8SJK9</accession>
<reference key="1">
    <citation type="journal article" date="2002" name="Mol. Phylogenet. Evol.">
        <title>Molecular phylogenetics of emydine turtles: taxonomic revision and the evolution of shell kinesis.</title>
        <authorList>
            <person name="Feldman C.R."/>
            <person name="Parham J.F."/>
        </authorList>
    </citation>
    <scope>NUCLEOTIDE SEQUENCE [GENOMIC DNA]</scope>
    <source>
        <strain>Isolate MVZ 137441</strain>
    </source>
</reference>
<evidence type="ECO:0000250" key="1"/>
<evidence type="ECO:0000250" key="2">
    <source>
        <dbReference type="UniProtKB" id="P00157"/>
    </source>
</evidence>
<evidence type="ECO:0000255" key="3">
    <source>
        <dbReference type="PROSITE-ProRule" id="PRU00967"/>
    </source>
</evidence>
<evidence type="ECO:0000255" key="4">
    <source>
        <dbReference type="PROSITE-ProRule" id="PRU00968"/>
    </source>
</evidence>
<keyword id="KW-0249">Electron transport</keyword>
<keyword id="KW-0349">Heme</keyword>
<keyword id="KW-0408">Iron</keyword>
<keyword id="KW-0472">Membrane</keyword>
<keyword id="KW-0479">Metal-binding</keyword>
<keyword id="KW-0496">Mitochondrion</keyword>
<keyword id="KW-0999">Mitochondrion inner membrane</keyword>
<keyword id="KW-0679">Respiratory chain</keyword>
<keyword id="KW-0812">Transmembrane</keyword>
<keyword id="KW-1133">Transmembrane helix</keyword>
<keyword id="KW-0813">Transport</keyword>
<keyword id="KW-0830">Ubiquinone</keyword>